<gene>
    <name evidence="6" type="primary">Orco</name>
    <name evidence="9" type="ORF">EAI_09968</name>
</gene>
<name>ORCO_HARSA</name>
<reference key="1">
    <citation type="journal article" date="2010" name="Science">
        <title>Genomic comparison of the ants Camponotus floridanus and Harpegnathos saltator.</title>
        <authorList>
            <person name="Bonasio R."/>
            <person name="Zhang G."/>
            <person name="Ye C."/>
            <person name="Mutti N.S."/>
            <person name="Fang X."/>
            <person name="Qin N."/>
            <person name="Donahue G."/>
            <person name="Yang P."/>
            <person name="Li Q."/>
            <person name="Li C."/>
            <person name="Zhang P."/>
            <person name="Huang Z."/>
            <person name="Berger S.L."/>
            <person name="Reinberg D."/>
            <person name="Wang J."/>
            <person name="Liebig J."/>
        </authorList>
    </citation>
    <scope>NUCLEOTIDE SEQUENCE [LARGE SCALE GENOMIC DNA]</scope>
    <source>
        <strain>R22 G/1</strain>
    </source>
</reference>
<reference key="2">
    <citation type="journal article" date="2017" name="Cell">
        <title>An engineered orco mutation produces aberrant social behavior and defective neural development in ants.</title>
        <authorList>
            <person name="Yan H."/>
            <person name="Opachaloemphan C."/>
            <person name="Mancini G."/>
            <person name="Yang H."/>
            <person name="Gallitto M."/>
            <person name="Mlejnek J."/>
            <person name="Leibholz A."/>
            <person name="Haight K."/>
            <person name="Ghaninia M."/>
            <person name="Huo L."/>
            <person name="Perry M."/>
            <person name="Slone J."/>
            <person name="Zhou X."/>
            <person name="Traficante M."/>
            <person name="Penick C.A."/>
            <person name="Dolezal K."/>
            <person name="Gokhale K."/>
            <person name="Stevens K."/>
            <person name="Fetter-Pruneda I."/>
            <person name="Bonasio R."/>
            <person name="Zwiebel L.J."/>
            <person name="Berger S.L."/>
            <person name="Liebig J."/>
            <person name="Reinberg D."/>
            <person name="Desplan C."/>
        </authorList>
    </citation>
    <scope>FUNCTION</scope>
    <scope>DISRUPTION PHENOTYPE</scope>
    <scope>IDENTIFICATION BY MASS SPECTROMETRY</scope>
</reference>
<organism>
    <name type="scientific">Harpegnathos saltator</name>
    <name type="common">Jerdon's jumping ant</name>
    <dbReference type="NCBI Taxonomy" id="610380"/>
    <lineage>
        <taxon>Eukaryota</taxon>
        <taxon>Metazoa</taxon>
        <taxon>Ecdysozoa</taxon>
        <taxon>Arthropoda</taxon>
        <taxon>Hexapoda</taxon>
        <taxon>Insecta</taxon>
        <taxon>Pterygota</taxon>
        <taxon>Neoptera</taxon>
        <taxon>Endopterygota</taxon>
        <taxon>Hymenoptera</taxon>
        <taxon>Apocrita</taxon>
        <taxon>Aculeata</taxon>
        <taxon>Formicoidea</taxon>
        <taxon>Formicidae</taxon>
        <taxon>Ponerinae</taxon>
        <taxon>Ponerini</taxon>
        <taxon>Harpegnathos</taxon>
    </lineage>
</organism>
<proteinExistence type="evidence at protein level"/>
<keyword id="KW-0085">Behavior</keyword>
<keyword id="KW-1003">Cell membrane</keyword>
<keyword id="KW-0325">Glycoprotein</keyword>
<keyword id="KW-0472">Membrane</keyword>
<keyword id="KW-0552">Olfaction</keyword>
<keyword id="KW-0675">Receptor</keyword>
<keyword id="KW-1185">Reference proteome</keyword>
<keyword id="KW-0716">Sensory transduction</keyword>
<keyword id="KW-0807">Transducer</keyword>
<keyword id="KW-0812">Transmembrane</keyword>
<keyword id="KW-1133">Transmembrane helix</keyword>
<accession>E2BJ30</accession>
<protein>
    <recommendedName>
        <fullName evidence="6">Odorant receptor coreceptor</fullName>
    </recommendedName>
</protein>
<comment type="function">
    <text evidence="1 5">Odorant coreceptor which complexes with conventional odorant receptors (ORs) to form odorant-sensing units, providing sensitive and prolonged odorant signaling and calcium permeability (By similarity). Obligate coreceptor of all odorant receptors (By similarity). Orco is a universal and integral part of the functional odorant receptor, involved in the dendritic localization of other olfactory receptors. Can form functional ion channels in the absence of an odor-binding odorant receptor (By similarity). Plays a central role in the perception of olfactory stimuli in ants and is essential for ant social organization (PubMed:28802043). Required for pheromone sensing and mating behavior (PubMed:28802043). Also required for the development and maintenance of odorant receptor neurons (ORNs) and of antennal lobe glomeruli (PubMed:28802043).</text>
</comment>
<comment type="subunit">
    <text evidence="1">Heterodimer with conventional odorant receptors (ORs).</text>
</comment>
<comment type="subcellular location">
    <subcellularLocation>
        <location evidence="7">Cell membrane</location>
        <topology evidence="2">Multi-pass membrane protein</topology>
    </subcellularLocation>
</comment>
<comment type="disruption phenotype">
    <text evidence="5">Impaired behavior and decreased reproductive performance, probably due to loss of pheromone sensing. Ants show strongly decreased sensitivity to various pure semiochemicals delivered in puffs of air, and display increased levels of wandering outside of the nest. In a solitary environment, homozygous mutants also display an abnormal antennal twitching behavior: they quickly move their antennae, similar to the quick antennal movement observed during dueling among workers in the transition to gamergates. Mating and reproduction are impaired: worker dueling and the transition to gamergates in the absence of a reproductive queen or gamergates. Ants also display gross neuroanatomical defects in the antennal lobe, with a dramatic decrease in the number of odorant receptor neurons and antennal lobe glomeruli.</text>
</comment>
<comment type="miscellaneous">
    <text evidence="5">In contrast to most eusocial ant species, where only the queen can transmit genetic information, workers in H.saltator ants can be converted into gamergates (pseudoqueens) that can found entire colonies, facilitating genetic studies (PubMed:28802043).</text>
</comment>
<comment type="similarity">
    <text evidence="7">Belongs to the insect chemoreceptor superfamily. Heteromeric odorant receptor channel (TC 1.A.69) family. Orco subfamily.</text>
</comment>
<comment type="online information" name="Protein Spotlight">
    <link uri="https://www.proteinspotlight.org/back_issues/197/"/>
    <text>Whispers - Issue 197 of November 2017</text>
</comment>
<evidence type="ECO:0000250" key="1">
    <source>
        <dbReference type="UniProtKB" id="Q7QCC7"/>
    </source>
</evidence>
<evidence type="ECO:0000255" key="2"/>
<evidence type="ECO:0000255" key="3">
    <source>
        <dbReference type="PROSITE-ProRule" id="PRU00498"/>
    </source>
</evidence>
<evidence type="ECO:0000256" key="4">
    <source>
        <dbReference type="SAM" id="MobiDB-lite"/>
    </source>
</evidence>
<evidence type="ECO:0000269" key="5">
    <source>
    </source>
</evidence>
<evidence type="ECO:0000303" key="6">
    <source>
    </source>
</evidence>
<evidence type="ECO:0000305" key="7"/>
<evidence type="ECO:0000305" key="8">
    <source>
    </source>
</evidence>
<evidence type="ECO:0000312" key="9">
    <source>
        <dbReference type="EMBL" id="EFN84180.1"/>
    </source>
</evidence>
<sequence>MMKMKQQGLVADLLPNIRVMKFFGHFVFNYYDDNSSKYLHKIFCCVNLFLLLLQFALCAVNLIIESADVDDLTANTITLLFFTHSIVKIIYFAVRSKYFYRTWAIWNNPNSHPLFAESNARYHAIALKKMRLLLFLVGATTVLSAIAWTVLTFFEHPIRKLVDPVTNETTIIELPQLLLRSYYPFDASKGIMHVIVLIYQFYWVLFMLIDANSLDVLFCSWLLFACEQLQHLKQIMKPLMELSATLDTVVPNSSELFKAGSAEHLRESENQPPPPVPPQGDSMLDLDLRNIYSNRQDFTATFRPTAGMTFNGGVGPNGLTKKQEMLVRSAIKYWVERHKHIVRLVTAVGDAYGFALLLHMLTTTITLTLLAYQATKVNGVNVYAASTIGYIIYTFGQVFLFCIFGNRLIEESTSVMEAAYSCHWYDGSEEAKTFVQIVCQQCQKAMSISGAKFFTVSLDLFASVLGAVVTYFMVLVQLK</sequence>
<feature type="chain" id="PRO_0000442002" description="Odorant receptor coreceptor">
    <location>
        <begin position="1"/>
        <end position="479"/>
    </location>
</feature>
<feature type="topological domain" description="Cytoplasmic" evidence="8">
    <location>
        <begin position="1"/>
        <end position="43"/>
    </location>
</feature>
<feature type="transmembrane region" description="Helical; Name=1" evidence="2">
    <location>
        <begin position="44"/>
        <end position="64"/>
    </location>
</feature>
<feature type="topological domain" description="Extracellular" evidence="8">
    <location>
        <begin position="65"/>
        <end position="73"/>
    </location>
</feature>
<feature type="transmembrane region" description="Helical; Name=2" evidence="2">
    <location>
        <begin position="74"/>
        <end position="94"/>
    </location>
</feature>
<feature type="topological domain" description="Cytoplasmic" evidence="8">
    <location>
        <begin position="95"/>
        <end position="133"/>
    </location>
</feature>
<feature type="transmembrane region" description="Helical; Name=3" evidence="2">
    <location>
        <begin position="134"/>
        <end position="154"/>
    </location>
</feature>
<feature type="topological domain" description="Extracellular" evidence="7 8">
    <location>
        <begin position="155"/>
        <end position="190"/>
    </location>
</feature>
<feature type="transmembrane region" description="Helical; Name=4" evidence="2">
    <location>
        <begin position="191"/>
        <end position="211"/>
    </location>
</feature>
<feature type="topological domain" description="Cytoplasmic" evidence="8">
    <location>
        <begin position="212"/>
        <end position="350"/>
    </location>
</feature>
<feature type="transmembrane region" description="Helical; Name=5" evidence="2">
    <location>
        <begin position="351"/>
        <end position="371"/>
    </location>
</feature>
<feature type="topological domain" description="Extracellular" evidence="7 8">
    <location>
        <begin position="372"/>
        <end position="383"/>
    </location>
</feature>
<feature type="transmembrane region" description="Helical; Name=6" evidence="2">
    <location>
        <begin position="384"/>
        <end position="404"/>
    </location>
</feature>
<feature type="topological domain" description="Cytoplasmic" evidence="8">
    <location>
        <begin position="405"/>
        <end position="455"/>
    </location>
</feature>
<feature type="transmembrane region" description="Helical; Name=7" evidence="2">
    <location>
        <begin position="456"/>
        <end position="476"/>
    </location>
</feature>
<feature type="topological domain" description="Extracellular" evidence="8">
    <location>
        <begin position="477"/>
        <end position="479"/>
    </location>
</feature>
<feature type="region of interest" description="Disordered" evidence="4">
    <location>
        <begin position="261"/>
        <end position="280"/>
    </location>
</feature>
<feature type="glycosylation site" description="N-linked (GlcNAc...) asparagine" evidence="3">
    <location>
        <position position="167"/>
    </location>
</feature>
<dbReference type="EMBL" id="GL448558">
    <property type="protein sequence ID" value="EFN84180.1"/>
    <property type="molecule type" value="Genomic_DNA"/>
</dbReference>
<dbReference type="SMR" id="E2BJ30"/>
<dbReference type="FunCoup" id="E2BJ30">
    <property type="interactions" value="40"/>
</dbReference>
<dbReference type="STRING" id="610380.E2BJ30"/>
<dbReference type="GlyCosmos" id="E2BJ30">
    <property type="glycosylation" value="1 site, No reported glycans"/>
</dbReference>
<dbReference type="EnsemblMetazoa" id="XM_011141465.3">
    <property type="protein sequence ID" value="XP_011139767.1"/>
    <property type="gene ID" value="LOC105183395"/>
</dbReference>
<dbReference type="GeneID" id="105183395"/>
<dbReference type="KEGG" id="hst:105183395"/>
<dbReference type="CTD" id="40650"/>
<dbReference type="InParanoid" id="E2BJ30"/>
<dbReference type="OMA" id="VERHKHI"/>
<dbReference type="OrthoDB" id="8175157at2759"/>
<dbReference type="PhylomeDB" id="E2BJ30"/>
<dbReference type="Proteomes" id="UP000008237">
    <property type="component" value="Unassembled WGS sequence"/>
</dbReference>
<dbReference type="GO" id="GO:0005886">
    <property type="term" value="C:plasma membrane"/>
    <property type="evidence" value="ECO:0007669"/>
    <property type="project" value="UniProtKB-SubCell"/>
</dbReference>
<dbReference type="GO" id="GO:0005549">
    <property type="term" value="F:odorant binding"/>
    <property type="evidence" value="ECO:0007669"/>
    <property type="project" value="InterPro"/>
</dbReference>
<dbReference type="GO" id="GO:0004984">
    <property type="term" value="F:olfactory receptor activity"/>
    <property type="evidence" value="ECO:0000315"/>
    <property type="project" value="UniProtKB"/>
</dbReference>
<dbReference type="GO" id="GO:0007469">
    <property type="term" value="P:antennal development"/>
    <property type="evidence" value="ECO:0000315"/>
    <property type="project" value="UniProtKB"/>
</dbReference>
<dbReference type="GO" id="GO:0050911">
    <property type="term" value="P:detection of chemical stimulus involved in sensory perception of smell"/>
    <property type="evidence" value="ECO:0000315"/>
    <property type="project" value="UniProtKB"/>
</dbReference>
<dbReference type="GO" id="GO:0043695">
    <property type="term" value="P:detection of pheromone"/>
    <property type="evidence" value="ECO:0000315"/>
    <property type="project" value="UniProtKB"/>
</dbReference>
<dbReference type="GO" id="GO:0007617">
    <property type="term" value="P:mating behavior"/>
    <property type="evidence" value="ECO:0000315"/>
    <property type="project" value="UniProtKB"/>
</dbReference>
<dbReference type="GO" id="GO:0042048">
    <property type="term" value="P:olfactory behavior"/>
    <property type="evidence" value="ECO:0000315"/>
    <property type="project" value="UniProtKB"/>
</dbReference>
<dbReference type="GO" id="GO:0019236">
    <property type="term" value="P:response to pheromone"/>
    <property type="evidence" value="ECO:0000315"/>
    <property type="project" value="UniProtKB"/>
</dbReference>
<dbReference type="GO" id="GO:0007165">
    <property type="term" value="P:signal transduction"/>
    <property type="evidence" value="ECO:0007669"/>
    <property type="project" value="UniProtKB-KW"/>
</dbReference>
<dbReference type="GO" id="GO:0035176">
    <property type="term" value="P:social behavior"/>
    <property type="evidence" value="ECO:0000315"/>
    <property type="project" value="UniProtKB"/>
</dbReference>
<dbReference type="InterPro" id="IPR004117">
    <property type="entry name" value="7tm6_olfct_rcpt"/>
</dbReference>
<dbReference type="PANTHER" id="PTHR21137">
    <property type="entry name" value="ODORANT RECEPTOR"/>
    <property type="match status" value="1"/>
</dbReference>
<dbReference type="PANTHER" id="PTHR21137:SF9">
    <property type="entry name" value="ODORANT RECEPTOR CORECEPTOR"/>
    <property type="match status" value="1"/>
</dbReference>
<dbReference type="Pfam" id="PF02949">
    <property type="entry name" value="7tm_6"/>
    <property type="match status" value="1"/>
</dbReference>